<evidence type="ECO:0000255" key="1"/>
<evidence type="ECO:0000256" key="2">
    <source>
        <dbReference type="SAM" id="MobiDB-lite"/>
    </source>
</evidence>
<evidence type="ECO:0000269" key="3">
    <source>
    </source>
</evidence>
<evidence type="ECO:0000305" key="4"/>
<sequence>MEIDEEEPMVFLDRTTRATRGKRMTKLLDDEVEEDEQFWNQEALKEEEHDDEYEAEREVADEFDSDFNDDEPEPDAVAVNEKELRDLPKKRLIYPGKTASKKKKKKTKVVSQLEYIPGDEKPGEELGNKEQEEKEENEAQEDMEGEKVIRKSTRTSVVVRQAERDALRAAIQATTKPIQRKKVGEEKRMTQEEMLLEAAQTEIMNLRNLERVLAREEEVKKKAIVHKAVYKGPQIRYHSKDGCNYLEFCNGASFNSELSTKSVPYPEKAVCVITGLPAKYRDPKTGLPYATRDAFKAIRERFMDEHDGLRKKMEMGDLFDTLVAKGFATKQKRTKIPKSNKSFSLRSSARFLSSESEEESEEDSD</sequence>
<feature type="chain" id="PRO_0000423731" description="SWR1 complex subunit 2">
    <location>
        <begin position="1"/>
        <end position="365"/>
    </location>
</feature>
<feature type="region of interest" description="Disordered" evidence="2">
    <location>
        <begin position="43"/>
        <end position="83"/>
    </location>
</feature>
<feature type="region of interest" description="Disordered" evidence="2">
    <location>
        <begin position="95"/>
        <end position="147"/>
    </location>
</feature>
<feature type="region of interest" description="Disordered" evidence="2">
    <location>
        <begin position="333"/>
        <end position="365"/>
    </location>
</feature>
<feature type="coiled-coil region" evidence="1">
    <location>
        <begin position="123"/>
        <end position="150"/>
    </location>
</feature>
<feature type="coiled-coil region" evidence="1">
    <location>
        <begin position="184"/>
        <end position="225"/>
    </location>
</feature>
<feature type="compositionally biased region" description="Acidic residues" evidence="2">
    <location>
        <begin position="48"/>
        <end position="74"/>
    </location>
</feature>
<feature type="compositionally biased region" description="Basic residues" evidence="2">
    <location>
        <begin position="99"/>
        <end position="108"/>
    </location>
</feature>
<feature type="compositionally biased region" description="Basic and acidic residues" evidence="2">
    <location>
        <begin position="118"/>
        <end position="132"/>
    </location>
</feature>
<feature type="compositionally biased region" description="Acidic residues" evidence="2">
    <location>
        <begin position="133"/>
        <end position="144"/>
    </location>
</feature>
<feature type="compositionally biased region" description="Low complexity" evidence="2">
    <location>
        <begin position="342"/>
        <end position="354"/>
    </location>
</feature>
<feature type="compositionally biased region" description="Acidic residues" evidence="2">
    <location>
        <begin position="355"/>
        <end position="365"/>
    </location>
</feature>
<feature type="sequence conflict" description="In Ref. 3; BAE99698." evidence="4" ref="3">
    <original>M</original>
    <variation>V</variation>
    <location>
        <position position="189"/>
    </location>
</feature>
<dbReference type="EMBL" id="AC006282">
    <property type="protein sequence ID" value="AAD20150.1"/>
    <property type="status" value="ALT_SEQ"/>
    <property type="molecule type" value="Genomic_DNA"/>
</dbReference>
<dbReference type="EMBL" id="CP002685">
    <property type="protein sequence ID" value="AEC09293.1"/>
    <property type="molecule type" value="Genomic_DNA"/>
</dbReference>
<dbReference type="EMBL" id="AK227712">
    <property type="protein sequence ID" value="BAE99698.1"/>
    <property type="molecule type" value="mRNA"/>
</dbReference>
<dbReference type="PIR" id="B84784">
    <property type="entry name" value="B84784"/>
</dbReference>
<dbReference type="RefSeq" id="NP_181212.2">
    <property type="nucleotide sequence ID" value="NM_129229.4"/>
</dbReference>
<dbReference type="SMR" id="F4IP06"/>
<dbReference type="BioGRID" id="3590">
    <property type="interactions" value="18"/>
</dbReference>
<dbReference type="FunCoup" id="F4IP06">
    <property type="interactions" value="3896"/>
</dbReference>
<dbReference type="IntAct" id="F4IP06">
    <property type="interactions" value="21"/>
</dbReference>
<dbReference type="STRING" id="3702.F4IP06"/>
<dbReference type="PaxDb" id="3702-AT2G36740.1"/>
<dbReference type="ProteomicsDB" id="226550"/>
<dbReference type="EnsemblPlants" id="AT2G36740.1">
    <property type="protein sequence ID" value="AT2G36740.1"/>
    <property type="gene ID" value="AT2G36740"/>
</dbReference>
<dbReference type="GeneID" id="818246"/>
<dbReference type="Gramene" id="AT2G36740.1">
    <property type="protein sequence ID" value="AT2G36740.1"/>
    <property type="gene ID" value="AT2G36740"/>
</dbReference>
<dbReference type="KEGG" id="ath:AT2G36740"/>
<dbReference type="Araport" id="AT2G36740"/>
<dbReference type="TAIR" id="AT2G36740">
    <property type="gene designation" value="SWC2"/>
</dbReference>
<dbReference type="eggNOG" id="KOG2897">
    <property type="taxonomic scope" value="Eukaryota"/>
</dbReference>
<dbReference type="HOGENOM" id="CLU_040862_1_0_1"/>
<dbReference type="InParanoid" id="F4IP06"/>
<dbReference type="OMA" id="TGPTIRY"/>
<dbReference type="OrthoDB" id="78296at2759"/>
<dbReference type="PRO" id="PR:F4IP06"/>
<dbReference type="Proteomes" id="UP000006548">
    <property type="component" value="Chromosome 2"/>
</dbReference>
<dbReference type="ExpressionAtlas" id="F4IP06">
    <property type="expression patterns" value="baseline and differential"/>
</dbReference>
<dbReference type="GO" id="GO:0000812">
    <property type="term" value="C:Swr1 complex"/>
    <property type="evidence" value="ECO:0000314"/>
    <property type="project" value="TAIR"/>
</dbReference>
<dbReference type="GO" id="GO:0030154">
    <property type="term" value="P:cell differentiation"/>
    <property type="evidence" value="ECO:0007669"/>
    <property type="project" value="UniProtKB-KW"/>
</dbReference>
<dbReference type="GO" id="GO:0009908">
    <property type="term" value="P:flower development"/>
    <property type="evidence" value="ECO:0007669"/>
    <property type="project" value="UniProtKB-KW"/>
</dbReference>
<dbReference type="InterPro" id="IPR013272">
    <property type="entry name" value="Vps72/YL1_C"/>
</dbReference>
<dbReference type="InterPro" id="IPR046757">
    <property type="entry name" value="YL1_N"/>
</dbReference>
<dbReference type="PANTHER" id="PTHR13275:SF4">
    <property type="entry name" value="VACUOLAR PROTEIN SORTING-ASSOCIATED PROTEIN 72 HOMOLOG"/>
    <property type="match status" value="1"/>
</dbReference>
<dbReference type="PANTHER" id="PTHR13275">
    <property type="entry name" value="YL-1 PROTEIN TRANSCRIPTION FACTOR-LIKE 1"/>
    <property type="match status" value="1"/>
</dbReference>
<dbReference type="Pfam" id="PF05764">
    <property type="entry name" value="YL1"/>
    <property type="match status" value="1"/>
</dbReference>
<dbReference type="Pfam" id="PF08265">
    <property type="entry name" value="YL1_C"/>
    <property type="match status" value="1"/>
</dbReference>
<dbReference type="SMART" id="SM00993">
    <property type="entry name" value="YL1_C"/>
    <property type="match status" value="1"/>
</dbReference>
<reference key="1">
    <citation type="journal article" date="1999" name="Nature">
        <title>Sequence and analysis of chromosome 2 of the plant Arabidopsis thaliana.</title>
        <authorList>
            <person name="Lin X."/>
            <person name="Kaul S."/>
            <person name="Rounsley S.D."/>
            <person name="Shea T.P."/>
            <person name="Benito M.-I."/>
            <person name="Town C.D."/>
            <person name="Fujii C.Y."/>
            <person name="Mason T.M."/>
            <person name="Bowman C.L."/>
            <person name="Barnstead M.E."/>
            <person name="Feldblyum T.V."/>
            <person name="Buell C.R."/>
            <person name="Ketchum K.A."/>
            <person name="Lee J.J."/>
            <person name="Ronning C.M."/>
            <person name="Koo H.L."/>
            <person name="Moffat K.S."/>
            <person name="Cronin L.A."/>
            <person name="Shen M."/>
            <person name="Pai G."/>
            <person name="Van Aken S."/>
            <person name="Umayam L."/>
            <person name="Tallon L.J."/>
            <person name="Gill J.E."/>
            <person name="Adams M.D."/>
            <person name="Carrera A.J."/>
            <person name="Creasy T.H."/>
            <person name="Goodman H.M."/>
            <person name="Somerville C.R."/>
            <person name="Copenhaver G.P."/>
            <person name="Preuss D."/>
            <person name="Nierman W.C."/>
            <person name="White O."/>
            <person name="Eisen J.A."/>
            <person name="Salzberg S.L."/>
            <person name="Fraser C.M."/>
            <person name="Venter J.C."/>
        </authorList>
    </citation>
    <scope>NUCLEOTIDE SEQUENCE [LARGE SCALE GENOMIC DNA]</scope>
    <source>
        <strain>cv. Columbia</strain>
    </source>
</reference>
<reference key="2">
    <citation type="journal article" date="2017" name="Plant J.">
        <title>Araport11: a complete reannotation of the Arabidopsis thaliana reference genome.</title>
        <authorList>
            <person name="Cheng C.Y."/>
            <person name="Krishnakumar V."/>
            <person name="Chan A.P."/>
            <person name="Thibaud-Nissen F."/>
            <person name="Schobel S."/>
            <person name="Town C.D."/>
        </authorList>
    </citation>
    <scope>GENOME REANNOTATION</scope>
    <source>
        <strain>cv. Columbia</strain>
    </source>
</reference>
<reference key="3">
    <citation type="submission" date="2006-07" db="EMBL/GenBank/DDBJ databases">
        <title>Large-scale analysis of RIKEN Arabidopsis full-length (RAFL) cDNAs.</title>
        <authorList>
            <person name="Totoki Y."/>
            <person name="Seki M."/>
            <person name="Ishida J."/>
            <person name="Nakajima M."/>
            <person name="Enju A."/>
            <person name="Kamiya A."/>
            <person name="Narusaka M."/>
            <person name="Shin-i T."/>
            <person name="Nakagawa M."/>
            <person name="Sakamoto N."/>
            <person name="Oishi K."/>
            <person name="Kohara Y."/>
            <person name="Kobayashi M."/>
            <person name="Toyoda A."/>
            <person name="Sakaki Y."/>
            <person name="Sakurai T."/>
            <person name="Iida K."/>
            <person name="Akiyama K."/>
            <person name="Satou M."/>
            <person name="Toyoda T."/>
            <person name="Konagaya A."/>
            <person name="Carninci P."/>
            <person name="Kawai J."/>
            <person name="Hayashizaki Y."/>
            <person name="Shinozaki K."/>
        </authorList>
    </citation>
    <scope>NUCLEOTIDE SEQUENCE [LARGE SCALE MRNA]</scope>
    <source>
        <strain>cv. Columbia</strain>
    </source>
</reference>
<reference key="4">
    <citation type="journal article" date="2007" name="Development">
        <title>Arabidopsis homologs of components of the SWR1 complex regulate flowering and plant development.</title>
        <authorList>
            <person name="Choi K."/>
            <person name="Park C."/>
            <person name="Lee J."/>
            <person name="Oh M."/>
            <person name="Noh B."/>
            <person name="Lee I."/>
        </authorList>
    </citation>
    <scope>FUNCTION</scope>
    <scope>INTERACTION WITH SWC6 AND H2A.F/Z PROTEINS</scope>
</reference>
<accession>F4IP06</accession>
<accession>Q0WT50</accession>
<accession>Q9ZQA0</accession>
<organism>
    <name type="scientific">Arabidopsis thaliana</name>
    <name type="common">Mouse-ear cress</name>
    <dbReference type="NCBI Taxonomy" id="3702"/>
    <lineage>
        <taxon>Eukaryota</taxon>
        <taxon>Viridiplantae</taxon>
        <taxon>Streptophyta</taxon>
        <taxon>Embryophyta</taxon>
        <taxon>Tracheophyta</taxon>
        <taxon>Spermatophyta</taxon>
        <taxon>Magnoliopsida</taxon>
        <taxon>eudicotyledons</taxon>
        <taxon>Gunneridae</taxon>
        <taxon>Pentapetalae</taxon>
        <taxon>rosids</taxon>
        <taxon>malvids</taxon>
        <taxon>Brassicales</taxon>
        <taxon>Brassicaceae</taxon>
        <taxon>Camelineae</taxon>
        <taxon>Arabidopsis</taxon>
    </lineage>
</organism>
<keyword id="KW-0175">Coiled coil</keyword>
<keyword id="KW-0217">Developmental protein</keyword>
<keyword id="KW-0221">Differentiation</keyword>
<keyword id="KW-0287">Flowering</keyword>
<keyword id="KW-1185">Reference proteome</keyword>
<protein>
    <recommendedName>
        <fullName>SWR1 complex subunit 2</fullName>
    </recommendedName>
</protein>
<gene>
    <name type="primary">SWC2</name>
    <name type="ordered locus">At2g36740</name>
    <name type="ORF">F13K3.14</name>
</gene>
<comment type="function">
    <text evidence="3">Component of the SWR1 complex which mediates the ATP-dependent exchange of histone H2A for the H2A variant H2A.F/Z leading to transcriptional regulation of selected genes (e.g. FLC) by chromatin remodeling.</text>
</comment>
<comment type="subunit">
    <text evidence="3">Component of the SWR1 chromatin-remodeling complex composed of at least ARP6/ESD1/SUF3, PIE1, SWC6, SWC2 and H2AZs (HTA8, HTA9, HTA11). Interacts directly with SWC6 and H2AZs, but not with ARP6.</text>
</comment>
<comment type="interaction">
    <interactant intactId="EBI-1537394">
        <id>F4IP06</id>
    </interactant>
    <interactant intactId="EBI-2367867">
        <id>Q1PF16</id>
        <label>BHLH19</label>
    </interactant>
    <organismsDiffer>false</organismsDiffer>
    <experiments>3</experiments>
</comment>
<comment type="interaction">
    <interactant intactId="EBI-1537394">
        <id>F4IP06</id>
    </interactant>
    <interactant intactId="EBI-1537433">
        <id>O23628</id>
        <label>H2AV</label>
    </interactant>
    <organismsDiffer>false</organismsDiffer>
    <experiments>3</experiments>
</comment>
<comment type="interaction">
    <interactant intactId="EBI-1537394">
        <id>F4IP06</id>
    </interactant>
    <interactant intactId="EBI-1537353">
        <id>Q9FHW2</id>
        <label>SWC6</label>
    </interactant>
    <organismsDiffer>false</organismsDiffer>
    <experiments>3</experiments>
</comment>
<comment type="similarity">
    <text evidence="4">Belongs to the VPS72/YL1 family.</text>
</comment>
<comment type="sequence caution" evidence="4">
    <conflict type="erroneous gene model prediction">
        <sequence resource="EMBL-CDS" id="AAD20150"/>
    </conflict>
</comment>
<name>SWC2_ARATH</name>
<proteinExistence type="evidence at protein level"/>